<evidence type="ECO:0000255" key="1">
    <source>
        <dbReference type="PROSITE-ProRule" id="PRU01210"/>
    </source>
</evidence>
<evidence type="ECO:0000269" key="2">
    <source>
    </source>
</evidence>
<evidence type="ECO:0000269" key="3">
    <source ref="3"/>
</evidence>
<evidence type="ECO:0000305" key="4"/>
<proteinExistence type="evidence at protein level"/>
<organism>
    <name type="scientific">Buthus occitanus tunetanus</name>
    <name type="common">Common European scorpion</name>
    <name type="synonym">Buthus tunetanus</name>
    <dbReference type="NCBI Taxonomy" id="6871"/>
    <lineage>
        <taxon>Eukaryota</taxon>
        <taxon>Metazoa</taxon>
        <taxon>Ecdysozoa</taxon>
        <taxon>Arthropoda</taxon>
        <taxon>Chelicerata</taxon>
        <taxon>Arachnida</taxon>
        <taxon>Scorpiones</taxon>
        <taxon>Buthida</taxon>
        <taxon>Buthoidea</taxon>
        <taxon>Buthidae</taxon>
        <taxon>Buthus</taxon>
    </lineage>
</organism>
<reference key="1">
    <citation type="journal article" date="1996" name="Eur. J. Biochem.">
        <title>A new scorpion venom toxin paralytic to insects that affects Na+ channel activation. Purification, structure, antigenicity and mode of action.</title>
        <authorList>
            <person name="Borchani L."/>
            <person name="Mansuelle P."/>
            <person name="Stankiewicz M."/>
            <person name="Grolleau F."/>
            <person name="Cestele S."/>
            <person name="Karoui H."/>
            <person name="Lapied B."/>
            <person name="Rochat H."/>
            <person name="Pelhate M."/>
            <person name="el Ayeb M."/>
        </authorList>
    </citation>
    <scope>PROTEIN SEQUENCE</scope>
    <source>
        <tissue>Venom</tissue>
    </source>
</reference>
<reference key="2">
    <citation type="journal article" date="2003" name="Arch. Inst. Pasteur Tunis">
        <title>Molecular cloning and nucleotide sequence analysis of encoded anti-insect toxin BotIT2 from the scorpion Buthus occitanus tunetanus venom.</title>
        <authorList>
            <person name="Bel Haj Rhouma R."/>
            <person name="Dkhil H."/>
            <person name="Benkhadir K."/>
            <person name="Borchani L."/>
            <person name="el Ayeb M."/>
            <person name="Karoui H."/>
        </authorList>
    </citation>
    <scope>NUCLEOTIDE SEQUENCE [MRNA]</scope>
    <source>
        <tissue>Venom gland</tissue>
    </source>
</reference>
<reference key="3">
    <citation type="journal article" date="1996" name="J. Insect Physiol.">
        <title>Bot IT2, a toxin paralytic to insects from the Buthus occitanus tunetanus venom modifying the activity of insect sodium channels.</title>
        <authorList>
            <person name="Stankiewicz M."/>
            <person name="Grolleau F."/>
            <person name="Lapied B."/>
            <person name="Borchani L."/>
            <person name="el Ayeb M."/>
            <person name="Pelhate M."/>
        </authorList>
    </citation>
    <scope>FUNCTION</scope>
</reference>
<reference key="4">
    <citation type="journal article" date="1997" name="FEBS Lett.">
        <title>Bot IT2: a new scorpion toxin to study receptor site on insect sodium channels.</title>
        <authorList>
            <person name="Cestele S."/>
            <person name="Borchani L."/>
            <person name="el Ayeb M."/>
            <person name="Rochat H."/>
        </authorList>
    </citation>
    <scope>FUNCTION</scope>
</reference>
<comment type="function">
    <text evidence="2 3">Beta toxins bind voltage-independently at site-4 of sodium channels (Nav) and shift the voltage of activation toward more negative potentials thereby affecting sodium channel activation and promoting spontaneous and repetitive firing. This toxin specifically acts by inducing a new current with very slow activation/deactivation kinetics due to the transformation of normal fast channels into slow ones. It possess properties of excitatory and depressant toxins. It is highly active on insects and less active on mammals.</text>
</comment>
<comment type="subcellular location">
    <subcellularLocation>
        <location>Secreted</location>
    </subcellularLocation>
</comment>
<comment type="tissue specificity">
    <text>Expressed by the venom gland.</text>
</comment>
<comment type="domain">
    <text evidence="4">Has the structural arrangement of an alpha-helix connected to antiparallel beta-sheets by disulfide bonds (CS-alpha/beta).</text>
</comment>
<comment type="similarity">
    <text evidence="4">Belongs to the long (4 C-C) scorpion toxin superfamily. Sodium channel inhibitor family. Beta subfamily.</text>
</comment>
<name>SIX2_BUTOC</name>
<feature type="chain" id="PRO_0000066714" description="Beta-toxin BotIT2">
    <location>
        <begin position="1"/>
        <end position="60"/>
    </location>
</feature>
<feature type="domain" description="LCN-type CS-alpha/beta" evidence="1">
    <location>
        <begin position="1"/>
        <end position="60"/>
    </location>
</feature>
<feature type="disulfide bond" evidence="1">
    <location>
        <begin position="10"/>
        <end position="60"/>
    </location>
</feature>
<feature type="disulfide bond" evidence="1">
    <location>
        <begin position="14"/>
        <end position="35"/>
    </location>
</feature>
<feature type="disulfide bond" evidence="1">
    <location>
        <begin position="21"/>
        <end position="42"/>
    </location>
</feature>
<feature type="disulfide bond" evidence="1">
    <location>
        <begin position="25"/>
        <end position="44"/>
    </location>
</feature>
<keyword id="KW-0903">Direct protein sequencing</keyword>
<keyword id="KW-1015">Disulfide bond</keyword>
<keyword id="KW-0872">Ion channel impairing toxin</keyword>
<keyword id="KW-0528">Neurotoxin</keyword>
<keyword id="KW-0964">Secreted</keyword>
<keyword id="KW-0800">Toxin</keyword>
<keyword id="KW-0738">Voltage-gated sodium channel impairing toxin</keyword>
<accession>P59863</accession>
<sequence>DGYIKGYKGCKITCVINDDYCDTECKAEGGTYGYCWKWGLACWCEDLPDEKRWKSETNTC</sequence>
<dbReference type="SMR" id="P59863"/>
<dbReference type="GO" id="GO:0005576">
    <property type="term" value="C:extracellular region"/>
    <property type="evidence" value="ECO:0007669"/>
    <property type="project" value="UniProtKB-SubCell"/>
</dbReference>
<dbReference type="GO" id="GO:0019871">
    <property type="term" value="F:sodium channel inhibitor activity"/>
    <property type="evidence" value="ECO:0007669"/>
    <property type="project" value="InterPro"/>
</dbReference>
<dbReference type="GO" id="GO:0090729">
    <property type="term" value="F:toxin activity"/>
    <property type="evidence" value="ECO:0007669"/>
    <property type="project" value="UniProtKB-KW"/>
</dbReference>
<dbReference type="GO" id="GO:0006952">
    <property type="term" value="P:defense response"/>
    <property type="evidence" value="ECO:0007669"/>
    <property type="project" value="InterPro"/>
</dbReference>
<dbReference type="CDD" id="cd23106">
    <property type="entry name" value="neurotoxins_LC_scorpion"/>
    <property type="match status" value="1"/>
</dbReference>
<dbReference type="FunFam" id="3.30.30.10:FF:000002">
    <property type="entry name" value="Alpha-like toxin BmK-M1"/>
    <property type="match status" value="1"/>
</dbReference>
<dbReference type="Gene3D" id="3.30.30.10">
    <property type="entry name" value="Knottin, scorpion toxin-like"/>
    <property type="match status" value="1"/>
</dbReference>
<dbReference type="InterPro" id="IPR044062">
    <property type="entry name" value="LCN-type_CS_alpha_beta_dom"/>
</dbReference>
<dbReference type="InterPro" id="IPR003614">
    <property type="entry name" value="Scorpion_toxin-like"/>
</dbReference>
<dbReference type="InterPro" id="IPR036574">
    <property type="entry name" value="Scorpion_toxin-like_sf"/>
</dbReference>
<dbReference type="InterPro" id="IPR018218">
    <property type="entry name" value="Scorpion_toxinL"/>
</dbReference>
<dbReference type="InterPro" id="IPR002061">
    <property type="entry name" value="Scorpion_toxinL/defensin"/>
</dbReference>
<dbReference type="Pfam" id="PF00537">
    <property type="entry name" value="Toxin_3"/>
    <property type="match status" value="1"/>
</dbReference>
<dbReference type="PRINTS" id="PR00285">
    <property type="entry name" value="SCORPNTOXIN"/>
</dbReference>
<dbReference type="SMART" id="SM00505">
    <property type="entry name" value="Knot1"/>
    <property type="match status" value="1"/>
</dbReference>
<dbReference type="SUPFAM" id="SSF57095">
    <property type="entry name" value="Scorpion toxin-like"/>
    <property type="match status" value="1"/>
</dbReference>
<dbReference type="PROSITE" id="PS51863">
    <property type="entry name" value="LCN_CSAB"/>
    <property type="match status" value="1"/>
</dbReference>
<protein>
    <recommendedName>
        <fullName>Beta-toxin BotIT2</fullName>
        <shortName>Bot IT2</shortName>
    </recommendedName>
    <alternativeName>
        <fullName>Insect toxin 2</fullName>
    </alternativeName>
</protein>